<name>AROQ_HALOH</name>
<evidence type="ECO:0000255" key="1">
    <source>
        <dbReference type="HAMAP-Rule" id="MF_00169"/>
    </source>
</evidence>
<proteinExistence type="inferred from homology"/>
<keyword id="KW-0028">Amino-acid biosynthesis</keyword>
<keyword id="KW-0057">Aromatic amino acid biosynthesis</keyword>
<keyword id="KW-0456">Lyase</keyword>
<keyword id="KW-1185">Reference proteome</keyword>
<gene>
    <name evidence="1" type="primary">aroQ</name>
    <name type="ordered locus">Hore_06130</name>
</gene>
<comment type="function">
    <text evidence="1">Catalyzes a trans-dehydration via an enolate intermediate.</text>
</comment>
<comment type="catalytic activity">
    <reaction evidence="1">
        <text>3-dehydroquinate = 3-dehydroshikimate + H2O</text>
        <dbReference type="Rhea" id="RHEA:21096"/>
        <dbReference type="ChEBI" id="CHEBI:15377"/>
        <dbReference type="ChEBI" id="CHEBI:16630"/>
        <dbReference type="ChEBI" id="CHEBI:32364"/>
        <dbReference type="EC" id="4.2.1.10"/>
    </reaction>
</comment>
<comment type="pathway">
    <text evidence="1">Metabolic intermediate biosynthesis; chorismate biosynthesis; chorismate from D-erythrose 4-phosphate and phosphoenolpyruvate: step 3/7.</text>
</comment>
<comment type="subunit">
    <text evidence="1">Homododecamer.</text>
</comment>
<comment type="similarity">
    <text evidence="1">Belongs to the type-II 3-dehydroquinase family.</text>
</comment>
<accession>B8D2E3</accession>
<organism>
    <name type="scientific">Halothermothrix orenii (strain H 168 / OCM 544 / DSM 9562)</name>
    <dbReference type="NCBI Taxonomy" id="373903"/>
    <lineage>
        <taxon>Bacteria</taxon>
        <taxon>Bacillati</taxon>
        <taxon>Bacillota</taxon>
        <taxon>Clostridia</taxon>
        <taxon>Halanaerobiales</taxon>
        <taxon>Halothermotrichaceae</taxon>
        <taxon>Halothermothrix</taxon>
    </lineage>
</organism>
<dbReference type="EC" id="4.2.1.10" evidence="1"/>
<dbReference type="EMBL" id="CP001098">
    <property type="protein sequence ID" value="ACL69370.1"/>
    <property type="molecule type" value="Genomic_DNA"/>
</dbReference>
<dbReference type="RefSeq" id="WP_012635558.1">
    <property type="nucleotide sequence ID" value="NC_011899.1"/>
</dbReference>
<dbReference type="SMR" id="B8D2E3"/>
<dbReference type="STRING" id="373903.Hore_06130"/>
<dbReference type="KEGG" id="hor:Hore_06130"/>
<dbReference type="eggNOG" id="COG0757">
    <property type="taxonomic scope" value="Bacteria"/>
</dbReference>
<dbReference type="HOGENOM" id="CLU_090968_1_0_9"/>
<dbReference type="OrthoDB" id="9790793at2"/>
<dbReference type="UniPathway" id="UPA00053">
    <property type="reaction ID" value="UER00086"/>
</dbReference>
<dbReference type="Proteomes" id="UP000000719">
    <property type="component" value="Chromosome"/>
</dbReference>
<dbReference type="GO" id="GO:0003855">
    <property type="term" value="F:3-dehydroquinate dehydratase activity"/>
    <property type="evidence" value="ECO:0007669"/>
    <property type="project" value="UniProtKB-UniRule"/>
</dbReference>
<dbReference type="GO" id="GO:0008652">
    <property type="term" value="P:amino acid biosynthetic process"/>
    <property type="evidence" value="ECO:0007669"/>
    <property type="project" value="UniProtKB-KW"/>
</dbReference>
<dbReference type="GO" id="GO:0009073">
    <property type="term" value="P:aromatic amino acid family biosynthetic process"/>
    <property type="evidence" value="ECO:0007669"/>
    <property type="project" value="UniProtKB-KW"/>
</dbReference>
<dbReference type="GO" id="GO:0009423">
    <property type="term" value="P:chorismate biosynthetic process"/>
    <property type="evidence" value="ECO:0007669"/>
    <property type="project" value="UniProtKB-UniRule"/>
</dbReference>
<dbReference type="GO" id="GO:0019631">
    <property type="term" value="P:quinate catabolic process"/>
    <property type="evidence" value="ECO:0007669"/>
    <property type="project" value="TreeGrafter"/>
</dbReference>
<dbReference type="CDD" id="cd00466">
    <property type="entry name" value="DHQase_II"/>
    <property type="match status" value="1"/>
</dbReference>
<dbReference type="Gene3D" id="3.40.50.9100">
    <property type="entry name" value="Dehydroquinase, class II"/>
    <property type="match status" value="1"/>
</dbReference>
<dbReference type="HAMAP" id="MF_00169">
    <property type="entry name" value="AroQ"/>
    <property type="match status" value="1"/>
</dbReference>
<dbReference type="InterPro" id="IPR001874">
    <property type="entry name" value="DHquinase_II"/>
</dbReference>
<dbReference type="InterPro" id="IPR018509">
    <property type="entry name" value="DHquinase_II_CS"/>
</dbReference>
<dbReference type="InterPro" id="IPR036441">
    <property type="entry name" value="DHquinase_II_sf"/>
</dbReference>
<dbReference type="NCBIfam" id="TIGR01088">
    <property type="entry name" value="aroQ"/>
    <property type="match status" value="1"/>
</dbReference>
<dbReference type="NCBIfam" id="NF003805">
    <property type="entry name" value="PRK05395.1-2"/>
    <property type="match status" value="1"/>
</dbReference>
<dbReference type="NCBIfam" id="NF003806">
    <property type="entry name" value="PRK05395.1-3"/>
    <property type="match status" value="1"/>
</dbReference>
<dbReference type="NCBIfam" id="NF003807">
    <property type="entry name" value="PRK05395.1-4"/>
    <property type="match status" value="1"/>
</dbReference>
<dbReference type="PANTHER" id="PTHR21272">
    <property type="entry name" value="CATABOLIC 3-DEHYDROQUINASE"/>
    <property type="match status" value="1"/>
</dbReference>
<dbReference type="PANTHER" id="PTHR21272:SF3">
    <property type="entry name" value="CATABOLIC 3-DEHYDROQUINASE"/>
    <property type="match status" value="1"/>
</dbReference>
<dbReference type="Pfam" id="PF01220">
    <property type="entry name" value="DHquinase_II"/>
    <property type="match status" value="1"/>
</dbReference>
<dbReference type="PIRSF" id="PIRSF001399">
    <property type="entry name" value="DHquinase_II"/>
    <property type="match status" value="1"/>
</dbReference>
<dbReference type="SUPFAM" id="SSF52304">
    <property type="entry name" value="Type II 3-dehydroquinate dehydratase"/>
    <property type="match status" value="1"/>
</dbReference>
<dbReference type="PROSITE" id="PS01029">
    <property type="entry name" value="DEHYDROQUINASE_II"/>
    <property type="match status" value="1"/>
</dbReference>
<sequence>MNRVAVIHGPNLNLLGRREPEVYGTKSLENINKEIEKRANNLKIEVDIFQSNHEGEIIDFIHDNYKALSGIIINPGGLTHYSIALRDALAAVRLPVVEVHISNIHKREDFRHRSVIASVAVGQITGLGTEGYLYALEAIVNIIKKGSY</sequence>
<feature type="chain" id="PRO_1000123692" description="3-dehydroquinate dehydratase">
    <location>
        <begin position="1"/>
        <end position="148"/>
    </location>
</feature>
<feature type="active site" description="Proton acceptor" evidence="1">
    <location>
        <position position="23"/>
    </location>
</feature>
<feature type="active site" description="Proton donor" evidence="1">
    <location>
        <position position="100"/>
    </location>
</feature>
<feature type="binding site" evidence="1">
    <location>
        <position position="74"/>
    </location>
    <ligand>
        <name>substrate</name>
    </ligand>
</feature>
<feature type="binding site" evidence="1">
    <location>
        <position position="80"/>
    </location>
    <ligand>
        <name>substrate</name>
    </ligand>
</feature>
<feature type="binding site" evidence="1">
    <location>
        <position position="87"/>
    </location>
    <ligand>
        <name>substrate</name>
    </ligand>
</feature>
<feature type="binding site" evidence="1">
    <location>
        <begin position="101"/>
        <end position="102"/>
    </location>
    <ligand>
        <name>substrate</name>
    </ligand>
</feature>
<feature type="binding site" evidence="1">
    <location>
        <position position="111"/>
    </location>
    <ligand>
        <name>substrate</name>
    </ligand>
</feature>
<feature type="site" description="Transition state stabilizer" evidence="1">
    <location>
        <position position="18"/>
    </location>
</feature>
<protein>
    <recommendedName>
        <fullName evidence="1">3-dehydroquinate dehydratase</fullName>
        <shortName evidence="1">3-dehydroquinase</shortName>
        <ecNumber evidence="1">4.2.1.10</ecNumber>
    </recommendedName>
    <alternativeName>
        <fullName evidence="1">Type II DHQase</fullName>
    </alternativeName>
</protein>
<reference key="1">
    <citation type="journal article" date="2009" name="PLoS ONE">
        <title>Genome analysis of the anaerobic thermohalophilic bacterium Halothermothrix orenii.</title>
        <authorList>
            <person name="Mavromatis K."/>
            <person name="Ivanova N."/>
            <person name="Anderson I."/>
            <person name="Lykidis A."/>
            <person name="Hooper S.D."/>
            <person name="Sun H."/>
            <person name="Kunin V."/>
            <person name="Lapidus A."/>
            <person name="Hugenholtz P."/>
            <person name="Patel B."/>
            <person name="Kyrpides N.C."/>
        </authorList>
    </citation>
    <scope>NUCLEOTIDE SEQUENCE [LARGE SCALE GENOMIC DNA]</scope>
    <source>
        <strain>H 168 / OCM 544 / DSM 9562</strain>
    </source>
</reference>